<dbReference type="EC" id="2.7.7.8" evidence="1"/>
<dbReference type="EMBL" id="AM180355">
    <property type="protein sequence ID" value="CAJ68176.1"/>
    <property type="molecule type" value="Genomic_DNA"/>
</dbReference>
<dbReference type="RefSeq" id="WP_003438316.1">
    <property type="nucleotide sequence ID" value="NZ_JAUPES010000015.1"/>
</dbReference>
<dbReference type="RefSeq" id="YP_001087814.1">
    <property type="nucleotide sequence ID" value="NC_009089.1"/>
</dbReference>
<dbReference type="SMR" id="Q18BI4"/>
<dbReference type="STRING" id="272563.CD630_13180"/>
<dbReference type="DNASU" id="4914478"/>
<dbReference type="EnsemblBacteria" id="CAJ68176">
    <property type="protein sequence ID" value="CAJ68176"/>
    <property type="gene ID" value="CD630_13180"/>
</dbReference>
<dbReference type="GeneID" id="66353719"/>
<dbReference type="KEGG" id="cdf:CD630_13180"/>
<dbReference type="KEGG" id="pdc:CDIF630_01474"/>
<dbReference type="PATRIC" id="fig|272563.120.peg.1378"/>
<dbReference type="eggNOG" id="COG1185">
    <property type="taxonomic scope" value="Bacteria"/>
</dbReference>
<dbReference type="OrthoDB" id="9804305at2"/>
<dbReference type="PhylomeDB" id="Q18BI4"/>
<dbReference type="BioCyc" id="PDIF272563:G12WB-1453-MONOMER"/>
<dbReference type="Proteomes" id="UP000001978">
    <property type="component" value="Chromosome"/>
</dbReference>
<dbReference type="GO" id="GO:0005829">
    <property type="term" value="C:cytosol"/>
    <property type="evidence" value="ECO:0007669"/>
    <property type="project" value="TreeGrafter"/>
</dbReference>
<dbReference type="GO" id="GO:0000175">
    <property type="term" value="F:3'-5'-RNA exonuclease activity"/>
    <property type="evidence" value="ECO:0007669"/>
    <property type="project" value="TreeGrafter"/>
</dbReference>
<dbReference type="GO" id="GO:0000287">
    <property type="term" value="F:magnesium ion binding"/>
    <property type="evidence" value="ECO:0007669"/>
    <property type="project" value="UniProtKB-UniRule"/>
</dbReference>
<dbReference type="GO" id="GO:0004654">
    <property type="term" value="F:polyribonucleotide nucleotidyltransferase activity"/>
    <property type="evidence" value="ECO:0007669"/>
    <property type="project" value="UniProtKB-UniRule"/>
</dbReference>
<dbReference type="GO" id="GO:0003723">
    <property type="term" value="F:RNA binding"/>
    <property type="evidence" value="ECO:0007669"/>
    <property type="project" value="UniProtKB-UniRule"/>
</dbReference>
<dbReference type="GO" id="GO:0006402">
    <property type="term" value="P:mRNA catabolic process"/>
    <property type="evidence" value="ECO:0007669"/>
    <property type="project" value="UniProtKB-UniRule"/>
</dbReference>
<dbReference type="GO" id="GO:0006396">
    <property type="term" value="P:RNA processing"/>
    <property type="evidence" value="ECO:0007669"/>
    <property type="project" value="InterPro"/>
</dbReference>
<dbReference type="CDD" id="cd02393">
    <property type="entry name" value="KH-I_PNPase"/>
    <property type="match status" value="1"/>
</dbReference>
<dbReference type="CDD" id="cd11363">
    <property type="entry name" value="RNase_PH_PNPase_1"/>
    <property type="match status" value="1"/>
</dbReference>
<dbReference type="CDD" id="cd11364">
    <property type="entry name" value="RNase_PH_PNPase_2"/>
    <property type="match status" value="1"/>
</dbReference>
<dbReference type="CDD" id="cd04472">
    <property type="entry name" value="S1_PNPase"/>
    <property type="match status" value="1"/>
</dbReference>
<dbReference type="FunFam" id="2.40.50.140:FF:000023">
    <property type="entry name" value="Polyribonucleotide nucleotidyltransferase"/>
    <property type="match status" value="1"/>
</dbReference>
<dbReference type="FunFam" id="3.30.1370.10:FF:000001">
    <property type="entry name" value="Polyribonucleotide nucleotidyltransferase"/>
    <property type="match status" value="1"/>
</dbReference>
<dbReference type="FunFam" id="3.30.230.70:FF:000001">
    <property type="entry name" value="Polyribonucleotide nucleotidyltransferase"/>
    <property type="match status" value="1"/>
</dbReference>
<dbReference type="FunFam" id="3.30.230.70:FF:000002">
    <property type="entry name" value="Polyribonucleotide nucleotidyltransferase"/>
    <property type="match status" value="1"/>
</dbReference>
<dbReference type="Gene3D" id="3.30.230.70">
    <property type="entry name" value="GHMP Kinase, N-terminal domain"/>
    <property type="match status" value="2"/>
</dbReference>
<dbReference type="Gene3D" id="3.30.1370.10">
    <property type="entry name" value="K Homology domain, type 1"/>
    <property type="match status" value="1"/>
</dbReference>
<dbReference type="Gene3D" id="2.40.50.140">
    <property type="entry name" value="Nucleic acid-binding proteins"/>
    <property type="match status" value="1"/>
</dbReference>
<dbReference type="HAMAP" id="MF_01595">
    <property type="entry name" value="PNPase"/>
    <property type="match status" value="1"/>
</dbReference>
<dbReference type="InterPro" id="IPR001247">
    <property type="entry name" value="ExoRNase_PH_dom1"/>
</dbReference>
<dbReference type="InterPro" id="IPR015847">
    <property type="entry name" value="ExoRNase_PH_dom2"/>
</dbReference>
<dbReference type="InterPro" id="IPR036345">
    <property type="entry name" value="ExoRNase_PH_dom2_sf"/>
</dbReference>
<dbReference type="InterPro" id="IPR004087">
    <property type="entry name" value="KH_dom"/>
</dbReference>
<dbReference type="InterPro" id="IPR004088">
    <property type="entry name" value="KH_dom_type_1"/>
</dbReference>
<dbReference type="InterPro" id="IPR036612">
    <property type="entry name" value="KH_dom_type_1_sf"/>
</dbReference>
<dbReference type="InterPro" id="IPR012340">
    <property type="entry name" value="NA-bd_OB-fold"/>
</dbReference>
<dbReference type="InterPro" id="IPR012162">
    <property type="entry name" value="PNPase"/>
</dbReference>
<dbReference type="InterPro" id="IPR027408">
    <property type="entry name" value="PNPase/RNase_PH_dom_sf"/>
</dbReference>
<dbReference type="InterPro" id="IPR015848">
    <property type="entry name" value="PNPase_PH_RNA-bd_bac/org-type"/>
</dbReference>
<dbReference type="InterPro" id="IPR036456">
    <property type="entry name" value="PNPase_PH_RNA-bd_sf"/>
</dbReference>
<dbReference type="InterPro" id="IPR020568">
    <property type="entry name" value="Ribosomal_Su5_D2-typ_SF"/>
</dbReference>
<dbReference type="InterPro" id="IPR003029">
    <property type="entry name" value="S1_domain"/>
</dbReference>
<dbReference type="NCBIfam" id="TIGR03591">
    <property type="entry name" value="polynuc_phos"/>
    <property type="match status" value="1"/>
</dbReference>
<dbReference type="NCBIfam" id="NF008805">
    <property type="entry name" value="PRK11824.1"/>
    <property type="match status" value="1"/>
</dbReference>
<dbReference type="PANTHER" id="PTHR11252">
    <property type="entry name" value="POLYRIBONUCLEOTIDE NUCLEOTIDYLTRANSFERASE"/>
    <property type="match status" value="1"/>
</dbReference>
<dbReference type="PANTHER" id="PTHR11252:SF0">
    <property type="entry name" value="POLYRIBONUCLEOTIDE NUCLEOTIDYLTRANSFERASE 1, MITOCHONDRIAL"/>
    <property type="match status" value="1"/>
</dbReference>
<dbReference type="Pfam" id="PF00013">
    <property type="entry name" value="KH_1"/>
    <property type="match status" value="1"/>
</dbReference>
<dbReference type="Pfam" id="PF03726">
    <property type="entry name" value="PNPase"/>
    <property type="match status" value="1"/>
</dbReference>
<dbReference type="Pfam" id="PF01138">
    <property type="entry name" value="RNase_PH"/>
    <property type="match status" value="2"/>
</dbReference>
<dbReference type="Pfam" id="PF03725">
    <property type="entry name" value="RNase_PH_C"/>
    <property type="match status" value="2"/>
</dbReference>
<dbReference type="Pfam" id="PF00575">
    <property type="entry name" value="S1"/>
    <property type="match status" value="1"/>
</dbReference>
<dbReference type="PIRSF" id="PIRSF005499">
    <property type="entry name" value="PNPase"/>
    <property type="match status" value="1"/>
</dbReference>
<dbReference type="SMART" id="SM00322">
    <property type="entry name" value="KH"/>
    <property type="match status" value="1"/>
</dbReference>
<dbReference type="SMART" id="SM00316">
    <property type="entry name" value="S1"/>
    <property type="match status" value="1"/>
</dbReference>
<dbReference type="SUPFAM" id="SSF54791">
    <property type="entry name" value="Eukaryotic type KH-domain (KH-domain type I)"/>
    <property type="match status" value="1"/>
</dbReference>
<dbReference type="SUPFAM" id="SSF50249">
    <property type="entry name" value="Nucleic acid-binding proteins"/>
    <property type="match status" value="1"/>
</dbReference>
<dbReference type="SUPFAM" id="SSF46915">
    <property type="entry name" value="Polynucleotide phosphorylase/guanosine pentaphosphate synthase (PNPase/GPSI), domain 3"/>
    <property type="match status" value="1"/>
</dbReference>
<dbReference type="SUPFAM" id="SSF55666">
    <property type="entry name" value="Ribonuclease PH domain 2-like"/>
    <property type="match status" value="2"/>
</dbReference>
<dbReference type="SUPFAM" id="SSF54211">
    <property type="entry name" value="Ribosomal protein S5 domain 2-like"/>
    <property type="match status" value="2"/>
</dbReference>
<dbReference type="PROSITE" id="PS50084">
    <property type="entry name" value="KH_TYPE_1"/>
    <property type="match status" value="1"/>
</dbReference>
<dbReference type="PROSITE" id="PS50126">
    <property type="entry name" value="S1"/>
    <property type="match status" value="1"/>
</dbReference>
<comment type="function">
    <text evidence="1">Involved in mRNA degradation. Catalyzes the phosphorolysis of single-stranded polyribonucleotides processively in the 3'- to 5'-direction.</text>
</comment>
<comment type="catalytic activity">
    <reaction evidence="1">
        <text>RNA(n+1) + phosphate = RNA(n) + a ribonucleoside 5'-diphosphate</text>
        <dbReference type="Rhea" id="RHEA:22096"/>
        <dbReference type="Rhea" id="RHEA-COMP:14527"/>
        <dbReference type="Rhea" id="RHEA-COMP:17342"/>
        <dbReference type="ChEBI" id="CHEBI:43474"/>
        <dbReference type="ChEBI" id="CHEBI:57930"/>
        <dbReference type="ChEBI" id="CHEBI:140395"/>
        <dbReference type="EC" id="2.7.7.8"/>
    </reaction>
</comment>
<comment type="cofactor">
    <cofactor evidence="1">
        <name>Mg(2+)</name>
        <dbReference type="ChEBI" id="CHEBI:18420"/>
    </cofactor>
</comment>
<comment type="subcellular location">
    <subcellularLocation>
        <location evidence="1">Cytoplasm</location>
    </subcellularLocation>
</comment>
<comment type="similarity">
    <text evidence="1">Belongs to the polyribonucleotide nucleotidyltransferase family.</text>
</comment>
<organism>
    <name type="scientific">Clostridioides difficile (strain 630)</name>
    <name type="common">Peptoclostridium difficile</name>
    <dbReference type="NCBI Taxonomy" id="272563"/>
    <lineage>
        <taxon>Bacteria</taxon>
        <taxon>Bacillati</taxon>
        <taxon>Bacillota</taxon>
        <taxon>Clostridia</taxon>
        <taxon>Peptostreptococcales</taxon>
        <taxon>Peptostreptococcaceae</taxon>
        <taxon>Clostridioides</taxon>
    </lineage>
</organism>
<name>PNP_CLOD6</name>
<feature type="chain" id="PRO_0000329598" description="Polyribonucleotide nucleotidyltransferase">
    <location>
        <begin position="1"/>
        <end position="703"/>
    </location>
</feature>
<feature type="domain" description="KH" evidence="1">
    <location>
        <begin position="555"/>
        <end position="614"/>
    </location>
</feature>
<feature type="domain" description="S1 motif" evidence="1">
    <location>
        <begin position="624"/>
        <end position="692"/>
    </location>
</feature>
<feature type="binding site" evidence="1">
    <location>
        <position position="488"/>
    </location>
    <ligand>
        <name>Mg(2+)</name>
        <dbReference type="ChEBI" id="CHEBI:18420"/>
    </ligand>
</feature>
<feature type="binding site" evidence="1">
    <location>
        <position position="494"/>
    </location>
    <ligand>
        <name>Mg(2+)</name>
        <dbReference type="ChEBI" id="CHEBI:18420"/>
    </ligand>
</feature>
<gene>
    <name evidence="1" type="primary">pnp</name>
    <name type="ordered locus">CD630_13180</name>
</gene>
<reference key="1">
    <citation type="journal article" date="2006" name="Nat. Genet.">
        <title>The multidrug-resistant human pathogen Clostridium difficile has a highly mobile, mosaic genome.</title>
        <authorList>
            <person name="Sebaihia M."/>
            <person name="Wren B.W."/>
            <person name="Mullany P."/>
            <person name="Fairweather N.F."/>
            <person name="Minton N."/>
            <person name="Stabler R."/>
            <person name="Thomson N.R."/>
            <person name="Roberts A.P."/>
            <person name="Cerdeno-Tarraga A.M."/>
            <person name="Wang H."/>
            <person name="Holden M.T.G."/>
            <person name="Wright A."/>
            <person name="Churcher C."/>
            <person name="Quail M.A."/>
            <person name="Baker S."/>
            <person name="Bason N."/>
            <person name="Brooks K."/>
            <person name="Chillingworth T."/>
            <person name="Cronin A."/>
            <person name="Davis P."/>
            <person name="Dowd L."/>
            <person name="Fraser A."/>
            <person name="Feltwell T."/>
            <person name="Hance Z."/>
            <person name="Holroyd S."/>
            <person name="Jagels K."/>
            <person name="Moule S."/>
            <person name="Mungall K."/>
            <person name="Price C."/>
            <person name="Rabbinowitsch E."/>
            <person name="Sharp S."/>
            <person name="Simmonds M."/>
            <person name="Stevens K."/>
            <person name="Unwin L."/>
            <person name="Whithead S."/>
            <person name="Dupuy B."/>
            <person name="Dougan G."/>
            <person name="Barrell B."/>
            <person name="Parkhill J."/>
        </authorList>
    </citation>
    <scope>NUCLEOTIDE SEQUENCE [LARGE SCALE GENOMIC DNA]</scope>
    <source>
        <strain>630</strain>
    </source>
</reference>
<proteinExistence type="inferred from homology"/>
<protein>
    <recommendedName>
        <fullName evidence="1">Polyribonucleotide nucleotidyltransferase</fullName>
        <ecNumber evidence="1">2.7.7.8</ecNumber>
    </recommendedName>
    <alternativeName>
        <fullName evidence="1">Polynucleotide phosphorylase</fullName>
        <shortName evidence="1">PNPase</shortName>
    </alternativeName>
</protein>
<accession>Q18BI4</accession>
<evidence type="ECO:0000255" key="1">
    <source>
        <dbReference type="HAMAP-Rule" id="MF_01595"/>
    </source>
</evidence>
<sequence>MFEHKIFKMDFAGRELSVEIGKICEMASGSCIVRYSDSMVMVNTTKSAKPRDGIDFFPLSVDYEEKLYSVGKIPGGFLKREGKPSEKAILTSRLIDRPIRPLFPKGFRNDVQVVATVLSVDQDCTPDIVAMIGSSIALSISDIPFNGPTGSVCVGLVDGAFVVNPNAEQREKSSMHLVVSGTKEAIMMVEAGADEVPDEVMLDAILFAHQEIKKIVEFIEGIVAEVGKEKMPVELYHAGEEITQLVREFATDKMKKAVQTFEKLERMENMDRVKEETLAHFEETLEDFEDFVGDIEEVLQDIIKEEVRKLIVHENVRPDNRKLEEIRPIWCETGMIPRAHGSAIFTRGQTQVLNVATLGALGDVQKLDGLDEEENKRYMHHYNFPAYSVGEARPSRGPGRREIGHGALAERALLPVIPSQEEFPYAIRLVSEVLSSNGSTSQASVCGSTLSLLDAGVPIKDMVAGIAMGLIKHDGKVAVLSDIQGMEDHLGDMDFKVAGTEYGITAIQMDIKIDGIDKEILQRALKQAKEGRIHILGEMRKTISQPKPELSPYAPKIVKMQINPDKIKDVIGPGGKIITKIIDETGVKIDIEQTGEVFISGIEIDMIKKAQELINNIVVEPEVGKTYKGKVSRIMNFGAFVEILPGKEGLLHISHIAHERVAKVEDVLNIGDEVEVKVTEIDEKGRVNLSRKVLLPKPEHKNK</sequence>
<keyword id="KW-0963">Cytoplasm</keyword>
<keyword id="KW-0460">Magnesium</keyword>
<keyword id="KW-0479">Metal-binding</keyword>
<keyword id="KW-0548">Nucleotidyltransferase</keyword>
<keyword id="KW-1185">Reference proteome</keyword>
<keyword id="KW-0694">RNA-binding</keyword>
<keyword id="KW-0808">Transferase</keyword>